<gene>
    <name type="ORF">AAEL012105</name>
</gene>
<sequence>MGLCKCPKRQVTTQFCFEHRVNVCENCMVVNHTKCTVQSYIQWLKDSDFDSSCPLCGSPLDNEDCVRLICYHVFHWKCLNAKQQSLPANTAPGGHTCPTCSDPIFPPVNLVSPVADVLRTRLGQVNWARNVLELPLLSEDKPDYYTTATTSAGVHNGNTFASSMSQTRSNERPESPHSIVNMESYVSNASPALDFHASSRRPLLARESPIGASDRDDNKYKRRTPQEIFSRWSRRLYAPSSKPPWRRTWFLVLGGCIGFVCIIYVLATLGRRGGDGEVGLIYNRNLPHEE</sequence>
<proteinExistence type="inferred from homology"/>
<comment type="subcellular location">
    <subcellularLocation>
        <location evidence="4">Membrane</location>
        <topology evidence="4">Single-pass membrane protein</topology>
    </subcellularLocation>
</comment>
<comment type="similarity">
    <text evidence="4">Belongs to the ZFPL1 family.</text>
</comment>
<reference key="1">
    <citation type="journal article" date="2007" name="Science">
        <title>Genome sequence of Aedes aegypti, a major arbovirus vector.</title>
        <authorList>
            <person name="Nene V."/>
            <person name="Wortman J.R."/>
            <person name="Lawson D."/>
            <person name="Haas B.J."/>
            <person name="Kodira C.D."/>
            <person name="Tu Z.J."/>
            <person name="Loftus B.J."/>
            <person name="Xi Z."/>
            <person name="Megy K."/>
            <person name="Grabherr M."/>
            <person name="Ren Q."/>
            <person name="Zdobnov E.M."/>
            <person name="Lobo N.F."/>
            <person name="Campbell K.S."/>
            <person name="Brown S.E."/>
            <person name="Bonaldo M.F."/>
            <person name="Zhu J."/>
            <person name="Sinkins S.P."/>
            <person name="Hogenkamp D.G."/>
            <person name="Amedeo P."/>
            <person name="Arensburger P."/>
            <person name="Atkinson P.W."/>
            <person name="Bidwell S.L."/>
            <person name="Biedler J."/>
            <person name="Birney E."/>
            <person name="Bruggner R.V."/>
            <person name="Costas J."/>
            <person name="Coy M.R."/>
            <person name="Crabtree J."/>
            <person name="Crawford M."/>
            <person name="DeBruyn B."/>
            <person name="DeCaprio D."/>
            <person name="Eiglmeier K."/>
            <person name="Eisenstadt E."/>
            <person name="El-Dorry H."/>
            <person name="Gelbart W.M."/>
            <person name="Gomes S.L."/>
            <person name="Hammond M."/>
            <person name="Hannick L.I."/>
            <person name="Hogan J.R."/>
            <person name="Holmes M.H."/>
            <person name="Jaffe D."/>
            <person name="Johnston S.J."/>
            <person name="Kennedy R.C."/>
            <person name="Koo H."/>
            <person name="Kravitz S."/>
            <person name="Kriventseva E.V."/>
            <person name="Kulp D."/>
            <person name="Labutti K."/>
            <person name="Lee E."/>
            <person name="Li S."/>
            <person name="Lovin D.D."/>
            <person name="Mao C."/>
            <person name="Mauceli E."/>
            <person name="Menck C.F."/>
            <person name="Miller J.R."/>
            <person name="Montgomery P."/>
            <person name="Mori A."/>
            <person name="Nascimento A.L."/>
            <person name="Naveira H.F."/>
            <person name="Nusbaum C."/>
            <person name="O'Leary S.B."/>
            <person name="Orvis J."/>
            <person name="Pertea M."/>
            <person name="Quesneville H."/>
            <person name="Reidenbach K.R."/>
            <person name="Rogers Y.-H.C."/>
            <person name="Roth C.W."/>
            <person name="Schneider J.R."/>
            <person name="Schatz M."/>
            <person name="Shumway M."/>
            <person name="Stanke M."/>
            <person name="Stinson E.O."/>
            <person name="Tubio J.M.C."/>
            <person name="Vanzee J.P."/>
            <person name="Verjovski-Almeida S."/>
            <person name="Werner D."/>
            <person name="White O.R."/>
            <person name="Wyder S."/>
            <person name="Zeng Q."/>
            <person name="Zhao Q."/>
            <person name="Zhao Y."/>
            <person name="Hill C.A."/>
            <person name="Raikhel A.S."/>
            <person name="Soares M.B."/>
            <person name="Knudson D.L."/>
            <person name="Lee N.H."/>
            <person name="Galagan J."/>
            <person name="Salzberg S.L."/>
            <person name="Paulsen I.T."/>
            <person name="Dimopoulos G."/>
            <person name="Collins F.H."/>
            <person name="Bruce B."/>
            <person name="Fraser-Liggett C.M."/>
            <person name="Severson D.W."/>
        </authorList>
    </citation>
    <scope>NUCLEOTIDE SEQUENCE [LARGE SCALE GENOMIC DNA]</scope>
    <source>
        <strain>LVPib12</strain>
    </source>
</reference>
<protein>
    <recommendedName>
        <fullName>Zinc finger protein-like 1 homolog</fullName>
    </recommendedName>
</protein>
<organism>
    <name type="scientific">Aedes aegypti</name>
    <name type="common">Yellowfever mosquito</name>
    <name type="synonym">Culex aegypti</name>
    <dbReference type="NCBI Taxonomy" id="7159"/>
    <lineage>
        <taxon>Eukaryota</taxon>
        <taxon>Metazoa</taxon>
        <taxon>Ecdysozoa</taxon>
        <taxon>Arthropoda</taxon>
        <taxon>Hexapoda</taxon>
        <taxon>Insecta</taxon>
        <taxon>Pterygota</taxon>
        <taxon>Neoptera</taxon>
        <taxon>Endopterygota</taxon>
        <taxon>Diptera</taxon>
        <taxon>Nematocera</taxon>
        <taxon>Culicoidea</taxon>
        <taxon>Culicidae</taxon>
        <taxon>Culicinae</taxon>
        <taxon>Aedini</taxon>
        <taxon>Aedes</taxon>
        <taxon>Stegomyia</taxon>
    </lineage>
</organism>
<keyword id="KW-0472">Membrane</keyword>
<keyword id="KW-0479">Metal-binding</keyword>
<keyword id="KW-1185">Reference proteome</keyword>
<keyword id="KW-0812">Transmembrane</keyword>
<keyword id="KW-1133">Transmembrane helix</keyword>
<keyword id="KW-0862">Zinc</keyword>
<keyword id="KW-0863">Zinc-finger</keyword>
<accession>Q16N38</accession>
<name>ZFPL1_AEDAE</name>
<dbReference type="EMBL" id="CH477841">
    <property type="protein sequence ID" value="EAT35748.1"/>
    <property type="molecule type" value="Genomic_DNA"/>
</dbReference>
<dbReference type="FunCoup" id="Q16N38">
    <property type="interactions" value="1246"/>
</dbReference>
<dbReference type="STRING" id="7159.Q16N38"/>
<dbReference type="PaxDb" id="7159-AAEL012105-PA"/>
<dbReference type="EnsemblMetazoa" id="AAEL012105-RA">
    <property type="protein sequence ID" value="AAEL012105-PA"/>
    <property type="gene ID" value="AAEL012105"/>
</dbReference>
<dbReference type="GeneID" id="5575829"/>
<dbReference type="KEGG" id="aag:5575829"/>
<dbReference type="VEuPathDB" id="VectorBase:AAEL012105"/>
<dbReference type="eggNOG" id="KOG3970">
    <property type="taxonomic scope" value="Eukaryota"/>
</dbReference>
<dbReference type="HOGENOM" id="CLU_075387_0_0_1"/>
<dbReference type="InParanoid" id="Q16N38"/>
<dbReference type="OMA" id="HDHDYNP"/>
<dbReference type="OrthoDB" id="1916590at2759"/>
<dbReference type="PhylomeDB" id="Q16N38"/>
<dbReference type="Proteomes" id="UP000008820">
    <property type="component" value="Chromosome 1"/>
</dbReference>
<dbReference type="Proteomes" id="UP000682892">
    <property type="component" value="Unassembled WGS sequence"/>
</dbReference>
<dbReference type="GO" id="GO:0005794">
    <property type="term" value="C:Golgi apparatus"/>
    <property type="evidence" value="ECO:0007669"/>
    <property type="project" value="TreeGrafter"/>
</dbReference>
<dbReference type="GO" id="GO:0016020">
    <property type="term" value="C:membrane"/>
    <property type="evidence" value="ECO:0007669"/>
    <property type="project" value="UniProtKB-SubCell"/>
</dbReference>
<dbReference type="GO" id="GO:0008270">
    <property type="term" value="F:zinc ion binding"/>
    <property type="evidence" value="ECO:0007669"/>
    <property type="project" value="UniProtKB-KW"/>
</dbReference>
<dbReference type="CDD" id="cd16487">
    <property type="entry name" value="mRING-H2-C3DHC3_ZFPL1"/>
    <property type="match status" value="1"/>
</dbReference>
<dbReference type="Gene3D" id="3.30.40.10">
    <property type="entry name" value="Zinc/RING finger domain, C3HC4 (zinc finger)"/>
    <property type="match status" value="1"/>
</dbReference>
<dbReference type="InterPro" id="IPR039043">
    <property type="entry name" value="ZFPL1"/>
</dbReference>
<dbReference type="InterPro" id="IPR001841">
    <property type="entry name" value="Znf_RING"/>
</dbReference>
<dbReference type="InterPro" id="IPR013083">
    <property type="entry name" value="Znf_RING/FYVE/PHD"/>
</dbReference>
<dbReference type="PANTHER" id="PTHR12981">
    <property type="entry name" value="ZINC FINGER PROTEIN-LIKE 1"/>
    <property type="match status" value="1"/>
</dbReference>
<dbReference type="PANTHER" id="PTHR12981:SF0">
    <property type="entry name" value="ZINC FINGER PROTEIN-LIKE 1"/>
    <property type="match status" value="1"/>
</dbReference>
<dbReference type="SMART" id="SM00184">
    <property type="entry name" value="RING"/>
    <property type="match status" value="1"/>
</dbReference>
<dbReference type="SUPFAM" id="SSF57850">
    <property type="entry name" value="RING/U-box"/>
    <property type="match status" value="1"/>
</dbReference>
<dbReference type="PROSITE" id="PS50089">
    <property type="entry name" value="ZF_RING_2"/>
    <property type="match status" value="1"/>
</dbReference>
<evidence type="ECO:0000255" key="1"/>
<evidence type="ECO:0000255" key="2">
    <source>
        <dbReference type="PROSITE-ProRule" id="PRU00175"/>
    </source>
</evidence>
<evidence type="ECO:0000256" key="3">
    <source>
        <dbReference type="SAM" id="MobiDB-lite"/>
    </source>
</evidence>
<evidence type="ECO:0000305" key="4"/>
<feature type="chain" id="PRO_0000355177" description="Zinc finger protein-like 1 homolog">
    <location>
        <begin position="1"/>
        <end position="290"/>
    </location>
</feature>
<feature type="transmembrane region" description="Helical" evidence="1">
    <location>
        <begin position="249"/>
        <end position="269"/>
    </location>
</feature>
<feature type="zinc finger region" description="B box-type; degenerate">
    <location>
        <begin position="1"/>
        <end position="43"/>
    </location>
</feature>
<feature type="zinc finger region" description="RING-type; atypical" evidence="2">
    <location>
        <begin position="53"/>
        <end position="101"/>
    </location>
</feature>
<feature type="region of interest" description="Disordered" evidence="3">
    <location>
        <begin position="156"/>
        <end position="175"/>
    </location>
</feature>
<feature type="compositionally biased region" description="Polar residues" evidence="3">
    <location>
        <begin position="156"/>
        <end position="168"/>
    </location>
</feature>